<comment type="function">
    <text evidence="1">Catalyzes the attachment of glycine to tRNA(Gly).</text>
</comment>
<comment type="catalytic activity">
    <reaction evidence="1">
        <text>tRNA(Gly) + glycine + ATP = glycyl-tRNA(Gly) + AMP + diphosphate</text>
        <dbReference type="Rhea" id="RHEA:16013"/>
        <dbReference type="Rhea" id="RHEA-COMP:9664"/>
        <dbReference type="Rhea" id="RHEA-COMP:9683"/>
        <dbReference type="ChEBI" id="CHEBI:30616"/>
        <dbReference type="ChEBI" id="CHEBI:33019"/>
        <dbReference type="ChEBI" id="CHEBI:57305"/>
        <dbReference type="ChEBI" id="CHEBI:78442"/>
        <dbReference type="ChEBI" id="CHEBI:78522"/>
        <dbReference type="ChEBI" id="CHEBI:456215"/>
        <dbReference type="EC" id="6.1.1.14"/>
    </reaction>
</comment>
<comment type="subunit">
    <text evidence="1">Homodimer.</text>
</comment>
<comment type="subcellular location">
    <subcellularLocation>
        <location evidence="1">Cytoplasm</location>
    </subcellularLocation>
</comment>
<comment type="similarity">
    <text evidence="1">Belongs to the class-II aminoacyl-tRNA synthetase family.</text>
</comment>
<dbReference type="EC" id="6.1.1.14" evidence="1"/>
<dbReference type="EMBL" id="CP000721">
    <property type="protein sequence ID" value="ABR32296.1"/>
    <property type="molecule type" value="Genomic_DNA"/>
</dbReference>
<dbReference type="RefSeq" id="WP_011967470.1">
    <property type="nucleotide sequence ID" value="NC_009617.1"/>
</dbReference>
<dbReference type="SMR" id="A6LPL6"/>
<dbReference type="GeneID" id="66342988"/>
<dbReference type="KEGG" id="cbe:Cbei_0106"/>
<dbReference type="eggNOG" id="COG0423">
    <property type="taxonomic scope" value="Bacteria"/>
</dbReference>
<dbReference type="HOGENOM" id="CLU_015515_2_1_9"/>
<dbReference type="Proteomes" id="UP000000565">
    <property type="component" value="Chromosome"/>
</dbReference>
<dbReference type="GO" id="GO:0005737">
    <property type="term" value="C:cytoplasm"/>
    <property type="evidence" value="ECO:0007669"/>
    <property type="project" value="UniProtKB-SubCell"/>
</dbReference>
<dbReference type="GO" id="GO:0005524">
    <property type="term" value="F:ATP binding"/>
    <property type="evidence" value="ECO:0007669"/>
    <property type="project" value="UniProtKB-UniRule"/>
</dbReference>
<dbReference type="GO" id="GO:0140096">
    <property type="term" value="F:catalytic activity, acting on a protein"/>
    <property type="evidence" value="ECO:0007669"/>
    <property type="project" value="UniProtKB-ARBA"/>
</dbReference>
<dbReference type="GO" id="GO:0004820">
    <property type="term" value="F:glycine-tRNA ligase activity"/>
    <property type="evidence" value="ECO:0000250"/>
    <property type="project" value="UniProtKB"/>
</dbReference>
<dbReference type="GO" id="GO:0046983">
    <property type="term" value="F:protein dimerization activity"/>
    <property type="evidence" value="ECO:0000250"/>
    <property type="project" value="UniProtKB"/>
</dbReference>
<dbReference type="GO" id="GO:0016740">
    <property type="term" value="F:transferase activity"/>
    <property type="evidence" value="ECO:0007669"/>
    <property type="project" value="UniProtKB-ARBA"/>
</dbReference>
<dbReference type="GO" id="GO:0006426">
    <property type="term" value="P:glycyl-tRNA aminoacylation"/>
    <property type="evidence" value="ECO:0007669"/>
    <property type="project" value="UniProtKB-UniRule"/>
</dbReference>
<dbReference type="CDD" id="cd00774">
    <property type="entry name" value="GlyRS-like_core"/>
    <property type="match status" value="1"/>
</dbReference>
<dbReference type="CDD" id="cd00858">
    <property type="entry name" value="GlyRS_anticodon"/>
    <property type="match status" value="1"/>
</dbReference>
<dbReference type="FunFam" id="3.40.50.800:FF:000002">
    <property type="entry name" value="Glycine--tRNA ligase"/>
    <property type="match status" value="1"/>
</dbReference>
<dbReference type="Gene3D" id="3.40.50.800">
    <property type="entry name" value="Anticodon-binding domain"/>
    <property type="match status" value="1"/>
</dbReference>
<dbReference type="Gene3D" id="3.30.930.10">
    <property type="entry name" value="Bira Bifunctional Protein, Domain 2"/>
    <property type="match status" value="1"/>
</dbReference>
<dbReference type="HAMAP" id="MF_00253_B">
    <property type="entry name" value="Gly_tRNA_synth_B"/>
    <property type="match status" value="1"/>
</dbReference>
<dbReference type="InterPro" id="IPR002314">
    <property type="entry name" value="aa-tRNA-synt_IIb"/>
</dbReference>
<dbReference type="InterPro" id="IPR006195">
    <property type="entry name" value="aa-tRNA-synth_II"/>
</dbReference>
<dbReference type="InterPro" id="IPR045864">
    <property type="entry name" value="aa-tRNA-synth_II/BPL/LPL"/>
</dbReference>
<dbReference type="InterPro" id="IPR004154">
    <property type="entry name" value="Anticodon-bd"/>
</dbReference>
<dbReference type="InterPro" id="IPR036621">
    <property type="entry name" value="Anticodon-bd_dom_sf"/>
</dbReference>
<dbReference type="InterPro" id="IPR027031">
    <property type="entry name" value="Gly-tRNA_synthase/POLG2"/>
</dbReference>
<dbReference type="InterPro" id="IPR022961">
    <property type="entry name" value="Gly_tRNA_ligase_bac"/>
</dbReference>
<dbReference type="InterPro" id="IPR033731">
    <property type="entry name" value="GlyRS-like_core"/>
</dbReference>
<dbReference type="InterPro" id="IPR002315">
    <property type="entry name" value="tRNA-synt_gly"/>
</dbReference>
<dbReference type="NCBIfam" id="TIGR00389">
    <property type="entry name" value="glyS_dimeric"/>
    <property type="match status" value="1"/>
</dbReference>
<dbReference type="NCBIfam" id="NF003211">
    <property type="entry name" value="PRK04173.1"/>
    <property type="match status" value="1"/>
</dbReference>
<dbReference type="PANTHER" id="PTHR10745:SF8">
    <property type="entry name" value="DNA POLYMERASE SUBUNIT GAMMA-2, MITOCHONDRIAL"/>
    <property type="match status" value="1"/>
</dbReference>
<dbReference type="PANTHER" id="PTHR10745">
    <property type="entry name" value="GLYCYL-TRNA SYNTHETASE/DNA POLYMERASE SUBUNIT GAMMA-2"/>
    <property type="match status" value="1"/>
</dbReference>
<dbReference type="Pfam" id="PF03129">
    <property type="entry name" value="HGTP_anticodon"/>
    <property type="match status" value="1"/>
</dbReference>
<dbReference type="Pfam" id="PF00587">
    <property type="entry name" value="tRNA-synt_2b"/>
    <property type="match status" value="1"/>
</dbReference>
<dbReference type="PRINTS" id="PR01043">
    <property type="entry name" value="TRNASYNTHGLY"/>
</dbReference>
<dbReference type="SUPFAM" id="SSF52954">
    <property type="entry name" value="Class II aaRS ABD-related"/>
    <property type="match status" value="1"/>
</dbReference>
<dbReference type="SUPFAM" id="SSF55681">
    <property type="entry name" value="Class II aaRS and biotin synthetases"/>
    <property type="match status" value="1"/>
</dbReference>
<dbReference type="PROSITE" id="PS50862">
    <property type="entry name" value="AA_TRNA_LIGASE_II"/>
    <property type="match status" value="1"/>
</dbReference>
<sequence>MAVEKTMDKIVALCKNRGFVFPGSDIYGGLANSWDYGPLGVEFKNNVKKAWWKKFVQESPYNVGLDSAILMNREVWVASGHVGGFSDPLMDCKECKARFRADKLVEDHMTENGAEVATADGWTNEQLKEYIERNNIVCPKCGKMNYTDIRKFNLMFKTFQGVTEDAKSEMYLRPETAQGIFVNFKAVQRTSRKKVPFGIAQIGKSFRNEITPGNFTFRTREFEQMELEFFCKPGTDLEWHKYWKDYCWNFLLNLNVKAENLRMRDHGEEELSFYSNATSDIEYLFPFGWGELWGIADRTDYDLSKHQEHSGQDLSYLDQTTNEKYVPYVIEPSLGADRVALAFLIEAYDEEELEGGDVRTVMHLHPALAPFKAAILPLSKKLSEKSLDIYAELSKKFNLDFDETGSIGKRYRRQDEIGTPYCITIDFDTLEDESVTIRNRDTMEQERIKISEIENYIQASLEF</sequence>
<name>SYG_CLOB8</name>
<accession>A6LPL6</accession>
<organism>
    <name type="scientific">Clostridium beijerinckii (strain ATCC 51743 / NCIMB 8052)</name>
    <name type="common">Clostridium acetobutylicum</name>
    <dbReference type="NCBI Taxonomy" id="290402"/>
    <lineage>
        <taxon>Bacteria</taxon>
        <taxon>Bacillati</taxon>
        <taxon>Bacillota</taxon>
        <taxon>Clostridia</taxon>
        <taxon>Eubacteriales</taxon>
        <taxon>Clostridiaceae</taxon>
        <taxon>Clostridium</taxon>
    </lineage>
</organism>
<feature type="chain" id="PRO_1000125527" description="Glycine--tRNA ligase">
    <location>
        <begin position="1"/>
        <end position="463"/>
    </location>
</feature>
<feature type="binding site" evidence="1">
    <location>
        <position position="100"/>
    </location>
    <ligand>
        <name>substrate</name>
    </ligand>
</feature>
<feature type="binding site" evidence="1">
    <location>
        <position position="175"/>
    </location>
    <ligand>
        <name>substrate</name>
    </ligand>
</feature>
<feature type="binding site" evidence="1">
    <location>
        <begin position="207"/>
        <end position="209"/>
    </location>
    <ligand>
        <name>ATP</name>
        <dbReference type="ChEBI" id="CHEBI:30616"/>
    </ligand>
</feature>
<feature type="binding site" evidence="1">
    <location>
        <begin position="217"/>
        <end position="222"/>
    </location>
    <ligand>
        <name>ATP</name>
        <dbReference type="ChEBI" id="CHEBI:30616"/>
    </ligand>
</feature>
<feature type="binding site" evidence="1">
    <location>
        <begin position="222"/>
        <end position="226"/>
    </location>
    <ligand>
        <name>substrate</name>
    </ligand>
</feature>
<feature type="binding site" evidence="1">
    <location>
        <begin position="291"/>
        <end position="292"/>
    </location>
    <ligand>
        <name>ATP</name>
        <dbReference type="ChEBI" id="CHEBI:30616"/>
    </ligand>
</feature>
<feature type="binding site" evidence="1">
    <location>
        <begin position="331"/>
        <end position="335"/>
    </location>
    <ligand>
        <name>substrate</name>
    </ligand>
</feature>
<feature type="binding site" evidence="1">
    <location>
        <begin position="335"/>
        <end position="338"/>
    </location>
    <ligand>
        <name>ATP</name>
        <dbReference type="ChEBI" id="CHEBI:30616"/>
    </ligand>
</feature>
<keyword id="KW-0030">Aminoacyl-tRNA synthetase</keyword>
<keyword id="KW-0067">ATP-binding</keyword>
<keyword id="KW-0963">Cytoplasm</keyword>
<keyword id="KW-0436">Ligase</keyword>
<keyword id="KW-0547">Nucleotide-binding</keyword>
<keyword id="KW-0648">Protein biosynthesis</keyword>
<evidence type="ECO:0000255" key="1">
    <source>
        <dbReference type="HAMAP-Rule" id="MF_00253"/>
    </source>
</evidence>
<gene>
    <name evidence="1" type="primary">glyQS</name>
    <name type="ordered locus">Cbei_0106</name>
</gene>
<reference key="1">
    <citation type="submission" date="2007-06" db="EMBL/GenBank/DDBJ databases">
        <title>Complete sequence of Clostridium beijerinckii NCIMB 8052.</title>
        <authorList>
            <consortium name="US DOE Joint Genome Institute"/>
            <person name="Copeland A."/>
            <person name="Lucas S."/>
            <person name="Lapidus A."/>
            <person name="Barry K."/>
            <person name="Detter J.C."/>
            <person name="Glavina del Rio T."/>
            <person name="Hammon N."/>
            <person name="Israni S."/>
            <person name="Dalin E."/>
            <person name="Tice H."/>
            <person name="Pitluck S."/>
            <person name="Sims D."/>
            <person name="Brettin T."/>
            <person name="Bruce D."/>
            <person name="Tapia R."/>
            <person name="Brainard J."/>
            <person name="Schmutz J."/>
            <person name="Larimer F."/>
            <person name="Land M."/>
            <person name="Hauser L."/>
            <person name="Kyrpides N."/>
            <person name="Mikhailova N."/>
            <person name="Bennet G."/>
            <person name="Cann I."/>
            <person name="Chen J.-S."/>
            <person name="Contreras A.L."/>
            <person name="Jones D."/>
            <person name="Kashket E."/>
            <person name="Mitchell W."/>
            <person name="Stoddard S."/>
            <person name="Schwarz W."/>
            <person name="Qureshi N."/>
            <person name="Young M."/>
            <person name="Shi Z."/>
            <person name="Ezeji T."/>
            <person name="White B."/>
            <person name="Blaschek H."/>
            <person name="Richardson P."/>
        </authorList>
    </citation>
    <scope>NUCLEOTIDE SEQUENCE [LARGE SCALE GENOMIC DNA]</scope>
    <source>
        <strain>ATCC 51743 / NCIMB 8052</strain>
    </source>
</reference>
<proteinExistence type="inferred from homology"/>
<protein>
    <recommendedName>
        <fullName evidence="1">Glycine--tRNA ligase</fullName>
        <ecNumber evidence="1">6.1.1.14</ecNumber>
    </recommendedName>
    <alternativeName>
        <fullName evidence="1">Glycyl-tRNA synthetase</fullName>
        <shortName evidence="1">GlyRS</shortName>
    </alternativeName>
</protein>